<reference key="1">
    <citation type="submission" date="1994-04" db="EMBL/GenBank/DDBJ databases">
        <title>The sucrose and raffinose operons of Pediococcus pentosaceus PPE1.0.</title>
        <authorList>
            <person name="Leenhouts K.K.J."/>
            <person name="Bolhuis A.A."/>
            <person name="Kok J.J."/>
            <person name="Venema G.G."/>
        </authorList>
    </citation>
    <scope>NUCLEOTIDE SEQUENCE [GENOMIC DNA]</scope>
    <source>
        <strain>PPE1.0</strain>
    </source>
</reference>
<name>AGAL1_PEDPE</name>
<proteinExistence type="inferred from homology"/>
<sequence length="733" mass="83314">MSLITVDQANRVFHLHNQTLSYIFAVEQGGTLSHLYFGGHVDHYHGELRYPRVDRGFSGNLPGSTDRTFSRDTLPKEYSTAGEMDYHLPAAIVRHTDGANALYLVYQGYRIEAGKPKLSGLPAAFVEDETEAETLTIVLVDQVSQVEFDLQYTIYRDRPVVTRSVQVCNQGDHAVNLEKVASMQIDFTDRQFETITLPGAHANERHPERGSINYGIQTFGSLRGTSSHQMNPFLALVDHTTTEFSGDAYGFNLVYSGNHAFELEKDQLDQLHLMVGINSYNFNWQLKAGATFQTPEVLMVYTNKGLNAMSQAYHHLIRERVVRSEFKNQERPIVVNNWEATFFDFNEAKLKPIVDEAKQLGIEMFVLDDGWFGHRDDDNSSLGDWQVDHRKFPQGLNHFVKYVHEQGLKFGIWLEPEMISYDSKLYQQHPDYLMQVPGRSPSPSRNQYILDLGRQAVRNNIFDQLDQLLKSKQIDYIKWDMNRHLSDIYSVALPPERQGEVYHRYVLGLYELLERLTTAYPHILFEGCSGGGGRFDAGMAYYMPQIWASDNTDAVARLTIQYGTSLAYPISLATAHVSVSPNQQTGRETSMSTRSAVAASGVLGYELDLTQLSSADKQIVQKQVVQYKQIRPLIQFGEFYRLKSPITSNQAAWMFVSPQQDEAIVMVFNLTSYAQPSLTKTKLVGLNPKLNYQNIATKAIFGGDELMQLGFYDPVVYQDYTTKVYHFKAVTEN</sequence>
<accession>P43467</accession>
<organism>
    <name type="scientific">Pediococcus pentosaceus</name>
    <dbReference type="NCBI Taxonomy" id="1255"/>
    <lineage>
        <taxon>Bacteria</taxon>
        <taxon>Bacillati</taxon>
        <taxon>Bacillota</taxon>
        <taxon>Bacilli</taxon>
        <taxon>Lactobacillales</taxon>
        <taxon>Lactobacillaceae</taxon>
        <taxon>Pediococcus</taxon>
    </lineage>
</organism>
<keyword id="KW-0326">Glycosidase</keyword>
<keyword id="KW-0378">Hydrolase</keyword>
<protein>
    <recommendedName>
        <fullName>Alpha-galactosidase 1</fullName>
        <ecNumber>3.2.1.22</ecNumber>
    </recommendedName>
    <alternativeName>
        <fullName>Melibiase</fullName>
    </alternativeName>
</protein>
<gene>
    <name type="primary">agaR</name>
</gene>
<comment type="function">
    <text>Alpha-galactosidase associated with the raffinose operon.</text>
</comment>
<comment type="catalytic activity">
    <reaction>
        <text>Hydrolysis of terminal, non-reducing alpha-D-galactose residues in alpha-D-galactosides, including galactose oligosaccharides, galactomannans and galactolipids.</text>
        <dbReference type="EC" id="3.2.1.22"/>
    </reaction>
</comment>
<comment type="similarity">
    <text evidence="2">Belongs to the glycosyl hydrolase 36 family.</text>
</comment>
<feature type="chain" id="PRO_0000134874" description="Alpha-galactosidase 1">
    <location>
        <begin position="1"/>
        <end position="733"/>
    </location>
</feature>
<feature type="active site" description="Nucleophile" evidence="1">
    <location>
        <position position="480"/>
    </location>
</feature>
<feature type="active site" description="Proton donor" evidence="1">
    <location>
        <position position="550"/>
    </location>
</feature>
<dbReference type="EC" id="3.2.1.22"/>
<dbReference type="EMBL" id="Z32771">
    <property type="protein sequence ID" value="CAA83665.1"/>
    <property type="molecule type" value="Genomic_DNA"/>
</dbReference>
<dbReference type="EMBL" id="L32093">
    <property type="protein sequence ID" value="AAA25564.1"/>
    <property type="molecule type" value="Genomic_DNA"/>
</dbReference>
<dbReference type="PIR" id="S44254">
    <property type="entry name" value="S44254"/>
</dbReference>
<dbReference type="RefSeq" id="WP_056979569.1">
    <property type="nucleotide sequence ID" value="NZ_WEOZ01000006.1"/>
</dbReference>
<dbReference type="SMR" id="P43467"/>
<dbReference type="CAZy" id="GH36">
    <property type="family name" value="Glycoside Hydrolase Family 36"/>
</dbReference>
<dbReference type="GO" id="GO:0004557">
    <property type="term" value="F:alpha-galactosidase activity"/>
    <property type="evidence" value="ECO:0007669"/>
    <property type="project" value="UniProtKB-EC"/>
</dbReference>
<dbReference type="GO" id="GO:0016052">
    <property type="term" value="P:carbohydrate catabolic process"/>
    <property type="evidence" value="ECO:0007669"/>
    <property type="project" value="InterPro"/>
</dbReference>
<dbReference type="CDD" id="cd14791">
    <property type="entry name" value="GH36"/>
    <property type="match status" value="1"/>
</dbReference>
<dbReference type="FunFam" id="3.20.20.70:FF:000118">
    <property type="entry name" value="Alpha-galactosidase"/>
    <property type="match status" value="1"/>
</dbReference>
<dbReference type="Gene3D" id="3.20.20.70">
    <property type="entry name" value="Aldolase class I"/>
    <property type="match status" value="1"/>
</dbReference>
<dbReference type="Gene3D" id="2.70.98.60">
    <property type="entry name" value="alpha-galactosidase from lactobacil brevis"/>
    <property type="match status" value="1"/>
</dbReference>
<dbReference type="Gene3D" id="2.60.40.1180">
    <property type="entry name" value="Golgi alpha-mannosidase II"/>
    <property type="match status" value="1"/>
</dbReference>
<dbReference type="InterPro" id="IPR013785">
    <property type="entry name" value="Aldolase_TIM"/>
</dbReference>
<dbReference type="InterPro" id="IPR038417">
    <property type="entry name" value="Alpga-gal_N_sf"/>
</dbReference>
<dbReference type="InterPro" id="IPR050985">
    <property type="entry name" value="Alpha-glycosidase_related"/>
</dbReference>
<dbReference type="InterPro" id="IPR000111">
    <property type="entry name" value="Glyco_hydro_27/36_CS"/>
</dbReference>
<dbReference type="InterPro" id="IPR002252">
    <property type="entry name" value="Glyco_hydro_36"/>
</dbReference>
<dbReference type="InterPro" id="IPR031705">
    <property type="entry name" value="Glyco_hydro_36_C"/>
</dbReference>
<dbReference type="InterPro" id="IPR031704">
    <property type="entry name" value="Glyco_hydro_36_N"/>
</dbReference>
<dbReference type="InterPro" id="IPR013780">
    <property type="entry name" value="Glyco_hydro_b"/>
</dbReference>
<dbReference type="InterPro" id="IPR017853">
    <property type="entry name" value="Glycoside_hydrolase_SF"/>
</dbReference>
<dbReference type="PANTHER" id="PTHR43053:SF3">
    <property type="entry name" value="ALPHA-GALACTOSIDASE C-RELATED"/>
    <property type="match status" value="1"/>
</dbReference>
<dbReference type="PANTHER" id="PTHR43053">
    <property type="entry name" value="GLYCOSIDASE FAMILY 31"/>
    <property type="match status" value="1"/>
</dbReference>
<dbReference type="Pfam" id="PF16874">
    <property type="entry name" value="Glyco_hydro_36C"/>
    <property type="match status" value="1"/>
</dbReference>
<dbReference type="Pfam" id="PF16875">
    <property type="entry name" value="Glyco_hydro_36N"/>
    <property type="match status" value="1"/>
</dbReference>
<dbReference type="Pfam" id="PF02065">
    <property type="entry name" value="Melibiase"/>
    <property type="match status" value="1"/>
</dbReference>
<dbReference type="PIRSF" id="PIRSF005536">
    <property type="entry name" value="Agal"/>
    <property type="match status" value="1"/>
</dbReference>
<dbReference type="PRINTS" id="PR00743">
    <property type="entry name" value="GLHYDRLASE36"/>
</dbReference>
<dbReference type="SUPFAM" id="SSF51445">
    <property type="entry name" value="(Trans)glycosidases"/>
    <property type="match status" value="1"/>
</dbReference>
<dbReference type="PROSITE" id="PS00512">
    <property type="entry name" value="ALPHA_GALACTOSIDASE"/>
    <property type="match status" value="1"/>
</dbReference>
<evidence type="ECO:0000250" key="1">
    <source>
        <dbReference type="UniProtKB" id="Q9ALJ4"/>
    </source>
</evidence>
<evidence type="ECO:0000305" key="2"/>